<proteinExistence type="evidence at protein level"/>
<comment type="function">
    <text evidence="1">Contacts pre-mRNA on both sides of the branch site early in spliceosome assembly.</text>
</comment>
<comment type="subunit">
    <text evidence="3 4">Belongs to the CWC complex (or CEF1-associated complex), a spliceosome sub-complex reminiscent of a late-stage spliceosome composed of the U2, U5 and U6 snRNAs and at least BUD13, BUD31, BRR2, CDC40, CEF1, CLF1, CUS1, CWC2, CWC15, CWC21, CWC22, CWC23, CWC24, CWC25, CWC27, ECM2, HSH155, IST3, ISY1, LEA1, MSL1, NTC20, PRP8, PRP9, PRP11, PRP19, PRP21, PRP22, PRP45, PRP46, SLU7, SMB1, SMD1, SMD2, SMD3, SMX2, SMX3, SNT309, SNU114, SPP2, SYF1, SYF2, RSE1 and YJU2. Interacts with RDS3.</text>
</comment>
<comment type="interaction">
    <interactant intactId="EBI-664">
        <id>P49955</id>
    </interactant>
    <interactant intactId="EBI-24073">
        <id>P46947</id>
        <label>BUD13</label>
    </interactant>
    <organismsDiffer>false</organismsDiffer>
    <experiments>3</experiments>
</comment>
<comment type="interaction">
    <interactant intactId="EBI-664">
        <id>P49955</id>
    </interactant>
    <interactant intactId="EBI-28299">
        <id>P53830</id>
        <label>CUS2</label>
    </interactant>
    <organismsDiffer>false</organismsDiffer>
    <experiments>3</experiments>
</comment>
<comment type="interaction">
    <interactant intactId="EBI-664">
        <id>P49955</id>
    </interactant>
    <interactant intactId="EBI-519">
        <id>Q04693</id>
        <label>RSE1</label>
    </interactant>
    <organismsDiffer>false</organismsDiffer>
    <experiments>4</experiments>
</comment>
<comment type="interaction">
    <interactant intactId="EBI-664">
        <id>P49955</id>
    </interactant>
    <interactant intactId="EBI-970846">
        <id>P0C074</id>
        <label>YSF3</label>
    </interactant>
    <organismsDiffer>false</organismsDiffer>
    <experiments>3</experiments>
</comment>
<comment type="subcellular location">
    <subcellularLocation>
        <location evidence="1">Nucleus</location>
    </subcellularLocation>
</comment>
<comment type="miscellaneous">
    <text evidence="5">Present with 521 molecules/cell in log phase SD medium.</text>
</comment>
<comment type="similarity">
    <text evidence="6">Belongs to the SF3B1 family.</text>
</comment>
<sequence>MSHPIQFVNANNSDKSHQLGGQYSIPQDLRENLQKEAARIGENEKDVLQEKMETRTVQNREDSYHKRRFDMKFEPDSDTQTVTSSENTQDAVVPRKRKSRWDVKGYEPPDESSTAVKENSDSALVNVEGIHDLMFFKPSDHKYFADVISKKPIDELNKDEKKERTLSMLLLKIKNGNTASRRTSMRILTDKAVTFGPEMIFNRLLPILLDRSLEDQERHLMIKTIDRVLYQLGDLTKPYVHKILVVAAPLLIDEDPMVRSTGQEIITNLSTVAGLKTILTVMRPDIENEDEYVRNVTSRAAAVVAKALGVNQLLPFINAACHSRKSWKARHTGIKIVQQIGILLGIGVLNHLTGLMSCIKDCLMDDHVPVRIVTAHTLSTLAENSYPYGIEVFNVVLEPLWKGIRSHRGKVLSSFLKAVGSMIPLMDPEYAGYYTTEAMRIIRREFDSPDDEMKKTILLVLQKCSAVESITPKFLREEIAPEFFQKFWVRRVALDRPLNKVVTYTTVTLAKKLGCSYTIDKLLTPLRDEAEPFRTMAVHAVTRTVNLLGTADLDERLETRLIDALLIAFQEQTNSDSIIFKGFGAVTVSLDIRMKPFLAPIVSTILNHLKHKTPLVRQHAADLCAILIPVIKNCHEFEMLNKLNIILYESLGEVYPEVLGSIINAMYCITSVMDLDKLQPPINQILPTLTPILRNKHRKVEVNTIKFVGLIGKLAPTYAPPKEWMRICFELLELLKSTNKEIRRSANATFGFIAEAIGPHDVLVALLNNLKVQERQLRVCTAVAIGIVAKVCGPYNVLPVIMNEYTTPETNVQNGVLKAMSFMFEYIGNMSKDYIYFITPLLEDALTDRDLVHRQTASNVITHLALNCSGTGHEDAFIHLMNLLIPNIFETSPHAIMRILEGLEALSQALGPGLFMNYIWAGLFHPAKNVRKAFWRVYNNMYVMYQDAMVPFYPVTPDNNEEYIEELDLVL</sequence>
<name>SF3B1_YEAST</name>
<accession>P49955</accession>
<accession>D6W0B5</accession>
<keyword id="KW-0002">3D-structure</keyword>
<keyword id="KW-0507">mRNA processing</keyword>
<keyword id="KW-0508">mRNA splicing</keyword>
<keyword id="KW-0539">Nucleus</keyword>
<keyword id="KW-1185">Reference proteome</keyword>
<keyword id="KW-0677">Repeat</keyword>
<keyword id="KW-0747">Spliceosome</keyword>
<gene>
    <name type="primary">HSH155</name>
    <name type="ordered locus">YMR288W</name>
    <name type="ORF">YM8021.14</name>
</gene>
<evidence type="ECO:0000250" key="1"/>
<evidence type="ECO:0000256" key="2">
    <source>
        <dbReference type="SAM" id="MobiDB-lite"/>
    </source>
</evidence>
<evidence type="ECO:0000269" key="3">
    <source>
    </source>
</evidence>
<evidence type="ECO:0000269" key="4">
    <source>
    </source>
</evidence>
<evidence type="ECO:0000269" key="5">
    <source>
    </source>
</evidence>
<evidence type="ECO:0000305" key="6"/>
<organism>
    <name type="scientific">Saccharomyces cerevisiae (strain ATCC 204508 / S288c)</name>
    <name type="common">Baker's yeast</name>
    <dbReference type="NCBI Taxonomy" id="559292"/>
    <lineage>
        <taxon>Eukaryota</taxon>
        <taxon>Fungi</taxon>
        <taxon>Dikarya</taxon>
        <taxon>Ascomycota</taxon>
        <taxon>Saccharomycotina</taxon>
        <taxon>Saccharomycetes</taxon>
        <taxon>Saccharomycetales</taxon>
        <taxon>Saccharomycetaceae</taxon>
        <taxon>Saccharomyces</taxon>
    </lineage>
</organism>
<protein>
    <recommendedName>
        <fullName>U2 snRNP component HSH155</fullName>
    </recommendedName>
</protein>
<reference key="1">
    <citation type="journal article" date="1997" name="Nature">
        <title>The nucleotide sequence of Saccharomyces cerevisiae chromosome XIII.</title>
        <authorList>
            <person name="Bowman S."/>
            <person name="Churcher C.M."/>
            <person name="Badcock K."/>
            <person name="Brown D."/>
            <person name="Chillingworth T."/>
            <person name="Connor R."/>
            <person name="Dedman K."/>
            <person name="Devlin K."/>
            <person name="Gentles S."/>
            <person name="Hamlin N."/>
            <person name="Hunt S."/>
            <person name="Jagels K."/>
            <person name="Lye G."/>
            <person name="Moule S."/>
            <person name="Odell C."/>
            <person name="Pearson D."/>
            <person name="Rajandream M.A."/>
            <person name="Rice P."/>
            <person name="Skelton J."/>
            <person name="Walsh S.V."/>
            <person name="Whitehead S."/>
            <person name="Barrell B.G."/>
        </authorList>
    </citation>
    <scope>NUCLEOTIDE SEQUENCE [LARGE SCALE GENOMIC DNA]</scope>
    <source>
        <strain>ATCC 204508 / S288c</strain>
    </source>
</reference>
<reference key="2">
    <citation type="journal article" date="2014" name="G3 (Bethesda)">
        <title>The reference genome sequence of Saccharomyces cerevisiae: Then and now.</title>
        <authorList>
            <person name="Engel S.R."/>
            <person name="Dietrich F.S."/>
            <person name="Fisk D.G."/>
            <person name="Binkley G."/>
            <person name="Balakrishnan R."/>
            <person name="Costanzo M.C."/>
            <person name="Dwight S.S."/>
            <person name="Hitz B.C."/>
            <person name="Karra K."/>
            <person name="Nash R.S."/>
            <person name="Weng S."/>
            <person name="Wong E.D."/>
            <person name="Lloyd P."/>
            <person name="Skrzypek M.S."/>
            <person name="Miyasato S.R."/>
            <person name="Simison M."/>
            <person name="Cherry J.M."/>
        </authorList>
    </citation>
    <scope>GENOME REANNOTATION</scope>
    <source>
        <strain>ATCC 204508 / S288c</strain>
    </source>
</reference>
<reference key="3">
    <citation type="journal article" date="2002" name="Mol. Cell. Biol.">
        <title>Proteomics analysis reveals stable multiprotein complexes in both fission and budding yeasts containing Myb-related Cdc5p/Cef1p, novel pre-mRNA splicing factors, and snRNAs.</title>
        <authorList>
            <person name="Ohi M.D."/>
            <person name="Link A.J."/>
            <person name="Ren L."/>
            <person name="Jennings J.L."/>
            <person name="McDonald W.H."/>
            <person name="Gould K.L."/>
        </authorList>
    </citation>
    <scope>IDENTIFICATION IN THE CWC COMPLEX</scope>
    <scope>IDENTIFICATION BY MASS SPECTROMETRY</scope>
</reference>
<reference key="4">
    <citation type="journal article" date="2003" name="Mol. Cell. Biol.">
        <title>Rds3p is required for stable U2 snRNP recruitment to the splicing apparatus.</title>
        <authorList>
            <person name="Wang Q."/>
            <person name="Rymond B.C."/>
        </authorList>
    </citation>
    <scope>INTERACTION WITH RDS3</scope>
</reference>
<reference key="5">
    <citation type="journal article" date="2003" name="Nature">
        <title>Global analysis of protein expression in yeast.</title>
        <authorList>
            <person name="Ghaemmaghami S."/>
            <person name="Huh W.-K."/>
            <person name="Bower K."/>
            <person name="Howson R.W."/>
            <person name="Belle A."/>
            <person name="Dephoure N."/>
            <person name="O'Shea E.K."/>
            <person name="Weissman J.S."/>
        </authorList>
    </citation>
    <scope>LEVEL OF PROTEIN EXPRESSION [LARGE SCALE ANALYSIS]</scope>
</reference>
<dbReference type="EMBL" id="Z49704">
    <property type="protein sequence ID" value="CAA89786.1"/>
    <property type="molecule type" value="Genomic_DNA"/>
</dbReference>
<dbReference type="EMBL" id="BK006946">
    <property type="protein sequence ID" value="DAA10189.1"/>
    <property type="molecule type" value="Genomic_DNA"/>
</dbReference>
<dbReference type="PIR" id="S54595">
    <property type="entry name" value="S54595"/>
</dbReference>
<dbReference type="RefSeq" id="NP_014015.1">
    <property type="nucleotide sequence ID" value="NM_001182795.1"/>
</dbReference>
<dbReference type="PDB" id="5GM6">
    <property type="method" value="EM"/>
    <property type="resolution" value="3.50 A"/>
    <property type="chains" value="G=1-971"/>
</dbReference>
<dbReference type="PDB" id="5LQW">
    <property type="method" value="EM"/>
    <property type="resolution" value="5.80 A"/>
    <property type="chains" value="Q=1-971"/>
</dbReference>
<dbReference type="PDB" id="5NRL">
    <property type="method" value="EM"/>
    <property type="resolution" value="7.20 A"/>
    <property type="chains" value="O=1-971"/>
</dbReference>
<dbReference type="PDB" id="5ZWM">
    <property type="method" value="EM"/>
    <property type="resolution" value="3.40 A"/>
    <property type="chains" value="1=1-971"/>
</dbReference>
<dbReference type="PDB" id="5ZWO">
    <property type="method" value="EM"/>
    <property type="resolution" value="3.90 A"/>
    <property type="chains" value="1=1-971"/>
</dbReference>
<dbReference type="PDB" id="6G90">
    <property type="method" value="EM"/>
    <property type="resolution" value="4.00 A"/>
    <property type="chains" value="O=1-971"/>
</dbReference>
<dbReference type="PDB" id="7OQB">
    <property type="method" value="EM"/>
    <property type="resolution" value="9.00 A"/>
    <property type="chains" value="O=1-971"/>
</dbReference>
<dbReference type="PDB" id="7OQE">
    <property type="method" value="EM"/>
    <property type="resolution" value="5.90 A"/>
    <property type="chains" value="O=1-971"/>
</dbReference>
<dbReference type="PDBsum" id="5GM6"/>
<dbReference type="PDBsum" id="5LQW"/>
<dbReference type="PDBsum" id="5NRL"/>
<dbReference type="PDBsum" id="5ZWM"/>
<dbReference type="PDBsum" id="5ZWO"/>
<dbReference type="PDBsum" id="6G90"/>
<dbReference type="PDBsum" id="7OQB"/>
<dbReference type="PDBsum" id="7OQE"/>
<dbReference type="EMDB" id="EMD-13028"/>
<dbReference type="EMDB" id="EMD-13033"/>
<dbReference type="EMDB" id="EMD-3683"/>
<dbReference type="EMDB" id="EMD-4364"/>
<dbReference type="EMDB" id="EMD-6972"/>
<dbReference type="EMDB" id="EMD-6974"/>
<dbReference type="EMDB" id="EMD-9524"/>
<dbReference type="SMR" id="P49955"/>
<dbReference type="BioGRID" id="35468">
    <property type="interactions" value="284"/>
</dbReference>
<dbReference type="ComplexPortal" id="CPX-1647">
    <property type="entry name" value="SF3B complex"/>
</dbReference>
<dbReference type="ComplexPortal" id="CPX-1651">
    <property type="entry name" value="PRP19-associated complex"/>
</dbReference>
<dbReference type="ComplexPortal" id="CPX-26">
    <property type="entry name" value="U2 small nuclear ribonucleoprotein complex"/>
</dbReference>
<dbReference type="DIP" id="DIP-2628N"/>
<dbReference type="FunCoup" id="P49955">
    <property type="interactions" value="1214"/>
</dbReference>
<dbReference type="IntAct" id="P49955">
    <property type="interactions" value="59"/>
</dbReference>
<dbReference type="MINT" id="P49955"/>
<dbReference type="STRING" id="4932.YMR288W"/>
<dbReference type="iPTMnet" id="P49955"/>
<dbReference type="PaxDb" id="4932-YMR288W"/>
<dbReference type="PeptideAtlas" id="P49955"/>
<dbReference type="EnsemblFungi" id="YMR288W_mRNA">
    <property type="protein sequence ID" value="YMR288W"/>
    <property type="gene ID" value="YMR288W"/>
</dbReference>
<dbReference type="GeneID" id="855332"/>
<dbReference type="KEGG" id="sce:YMR288W"/>
<dbReference type="AGR" id="SGD:S000004901"/>
<dbReference type="SGD" id="S000004901">
    <property type="gene designation" value="HSH155"/>
</dbReference>
<dbReference type="VEuPathDB" id="FungiDB:YMR288W"/>
<dbReference type="eggNOG" id="KOG0213">
    <property type="taxonomic scope" value="Eukaryota"/>
</dbReference>
<dbReference type="GeneTree" id="ENSGT00390000018393"/>
<dbReference type="HOGENOM" id="CLU_002242_0_1_1"/>
<dbReference type="InParanoid" id="P49955"/>
<dbReference type="OMA" id="LVMNYVW"/>
<dbReference type="OrthoDB" id="438939at2759"/>
<dbReference type="BioCyc" id="YEAST:G3O-32958-MONOMER"/>
<dbReference type="BioGRID-ORCS" id="855332">
    <property type="hits" value="1 hit in 10 CRISPR screens"/>
</dbReference>
<dbReference type="PRO" id="PR:P49955"/>
<dbReference type="Proteomes" id="UP000002311">
    <property type="component" value="Chromosome XIII"/>
</dbReference>
<dbReference type="RNAct" id="P49955">
    <property type="molecule type" value="protein"/>
</dbReference>
<dbReference type="GO" id="GO:0071013">
    <property type="term" value="C:catalytic step 2 spliceosome"/>
    <property type="evidence" value="ECO:0000318"/>
    <property type="project" value="GO_Central"/>
</dbReference>
<dbReference type="GO" id="GO:0005634">
    <property type="term" value="C:nucleus"/>
    <property type="evidence" value="ECO:0000303"/>
    <property type="project" value="ComplexPortal"/>
</dbReference>
<dbReference type="GO" id="GO:0000974">
    <property type="term" value="C:Prp19 complex"/>
    <property type="evidence" value="ECO:0000353"/>
    <property type="project" value="ComplexPortal"/>
</dbReference>
<dbReference type="GO" id="GO:0005681">
    <property type="term" value="C:spliceosomal complex"/>
    <property type="evidence" value="ECO:0000303"/>
    <property type="project" value="ComplexPortal"/>
</dbReference>
<dbReference type="GO" id="GO:0005686">
    <property type="term" value="C:U2 snRNP"/>
    <property type="evidence" value="ECO:0000314"/>
    <property type="project" value="SGD"/>
</dbReference>
<dbReference type="GO" id="GO:0071004">
    <property type="term" value="C:U2-type prespliceosome"/>
    <property type="evidence" value="ECO:0000314"/>
    <property type="project" value="SGD"/>
</dbReference>
<dbReference type="GO" id="GO:0005684">
    <property type="term" value="C:U2-type spliceosomal complex"/>
    <property type="evidence" value="ECO:0000353"/>
    <property type="project" value="ComplexPortal"/>
</dbReference>
<dbReference type="GO" id="GO:0003729">
    <property type="term" value="F:mRNA binding"/>
    <property type="evidence" value="ECO:0000314"/>
    <property type="project" value="SGD"/>
</dbReference>
<dbReference type="GO" id="GO:0000398">
    <property type="term" value="P:mRNA splicing, via spliceosome"/>
    <property type="evidence" value="ECO:0000353"/>
    <property type="project" value="SGD"/>
</dbReference>
<dbReference type="GO" id="GO:0000245">
    <property type="term" value="P:spliceosomal complex assembly"/>
    <property type="evidence" value="ECO:0000353"/>
    <property type="project" value="SGD"/>
</dbReference>
<dbReference type="GO" id="GO:1903241">
    <property type="term" value="P:U2-type prespliceosome assembly"/>
    <property type="evidence" value="ECO:0000303"/>
    <property type="project" value="ComplexPortal"/>
</dbReference>
<dbReference type="FunFam" id="1.25.10.10:FF:000890">
    <property type="entry name" value="Hsh155p"/>
    <property type="match status" value="1"/>
</dbReference>
<dbReference type="FunFam" id="1.25.10.10:FF:000069">
    <property type="entry name" value="Splicing factor 3B subunit 1"/>
    <property type="match status" value="1"/>
</dbReference>
<dbReference type="FunFam" id="1.25.10.10:FF:000799">
    <property type="entry name" value="U2 snRNP component HSH155"/>
    <property type="match status" value="1"/>
</dbReference>
<dbReference type="Gene3D" id="1.25.10.10">
    <property type="entry name" value="Leucine-rich Repeat Variant"/>
    <property type="match status" value="3"/>
</dbReference>
<dbReference type="InterPro" id="IPR011989">
    <property type="entry name" value="ARM-like"/>
</dbReference>
<dbReference type="InterPro" id="IPR016024">
    <property type="entry name" value="ARM-type_fold"/>
</dbReference>
<dbReference type="InterPro" id="IPR054573">
    <property type="entry name" value="PP2A/SF3B1-like_HEAT"/>
</dbReference>
<dbReference type="InterPro" id="IPR038737">
    <property type="entry name" value="SF3b_su1-like"/>
</dbReference>
<dbReference type="PANTHER" id="PTHR12097">
    <property type="entry name" value="SPLICING FACTOR 3B, SUBUNIT 1-RELATED"/>
    <property type="match status" value="1"/>
</dbReference>
<dbReference type="Pfam" id="PF22646">
    <property type="entry name" value="PPP2R1A-like_HEAT"/>
    <property type="match status" value="1"/>
</dbReference>
<dbReference type="SUPFAM" id="SSF48371">
    <property type="entry name" value="ARM repeat"/>
    <property type="match status" value="1"/>
</dbReference>
<feature type="chain" id="PRO_0000174327" description="U2 snRNP component HSH155">
    <location>
        <begin position="1"/>
        <end position="971"/>
    </location>
</feature>
<feature type="repeat" description="HEAT 1">
    <location>
        <begin position="199"/>
        <end position="237"/>
    </location>
</feature>
<feature type="repeat" description="HEAT 2">
    <location>
        <begin position="273"/>
        <end position="310"/>
    </location>
</feature>
<feature type="repeat" description="HEAT 3">
    <location>
        <begin position="350"/>
        <end position="387"/>
    </location>
</feature>
<feature type="repeat" description="HEAT 4">
    <location>
        <begin position="513"/>
        <end position="550"/>
    </location>
</feature>
<feature type="repeat" description="HEAT 5">
    <location>
        <begin position="596"/>
        <end position="633"/>
    </location>
</feature>
<feature type="repeat" description="HEAT 6">
    <location>
        <begin position="680"/>
        <end position="717"/>
    </location>
</feature>
<feature type="repeat" description="HEAT 7">
    <location>
        <begin position="722"/>
        <end position="759"/>
    </location>
</feature>
<feature type="repeat" description="HEAT 8">
    <location>
        <begin position="792"/>
        <end position="829"/>
    </location>
</feature>
<feature type="repeat" description="HEAT 9">
    <location>
        <begin position="832"/>
        <end position="870"/>
    </location>
</feature>
<feature type="region of interest" description="Disordered" evidence="2">
    <location>
        <begin position="1"/>
        <end position="22"/>
    </location>
</feature>
<feature type="region of interest" description="Disordered" evidence="2">
    <location>
        <begin position="54"/>
        <end position="118"/>
    </location>
</feature>
<feature type="compositionally biased region" description="Polar residues" evidence="2">
    <location>
        <begin position="8"/>
        <end position="22"/>
    </location>
</feature>
<feature type="compositionally biased region" description="Basic and acidic residues" evidence="2">
    <location>
        <begin position="54"/>
        <end position="75"/>
    </location>
</feature>
<feature type="compositionally biased region" description="Polar residues" evidence="2">
    <location>
        <begin position="78"/>
        <end position="90"/>
    </location>
</feature>